<feature type="signal peptide" evidence="1">
    <location>
        <begin position="1"/>
        <end position="17"/>
    </location>
</feature>
<feature type="chain" id="PRO_0000440377" description="Hemagglutinin" evidence="1">
    <location>
        <begin position="18"/>
        <end position="565"/>
    </location>
</feature>
<feature type="chain" id="PRO_0000039034" description="Hemagglutinin HA1 chain" evidence="1">
    <location>
        <begin position="18"/>
        <end position="342"/>
    </location>
</feature>
<feature type="chain" id="PRO_0000039035" description="Hemagglutinin HA2 chain" evidence="1">
    <location>
        <begin position="344"/>
        <end position="565"/>
    </location>
</feature>
<feature type="topological domain" description="Extracellular" evidence="1">
    <location>
        <begin position="18"/>
        <end position="528"/>
    </location>
</feature>
<feature type="transmembrane region" description="Helical" evidence="1">
    <location>
        <begin position="529"/>
        <end position="549"/>
    </location>
</feature>
<feature type="topological domain" description="Cytoplasmic" evidence="1">
    <location>
        <begin position="550"/>
        <end position="565"/>
    </location>
</feature>
<feature type="site" description="Cleavage; by host" evidence="1">
    <location>
        <begin position="343"/>
        <end position="344"/>
    </location>
</feature>
<feature type="lipid moiety-binding region" description="S-palmitoyl cysteine; by host" evidence="1">
    <location>
        <position position="554"/>
    </location>
</feature>
<feature type="lipid moiety-binding region" description="S-palmitoyl cysteine; by host" evidence="1">
    <location>
        <position position="561"/>
    </location>
</feature>
<feature type="lipid moiety-binding region" description="S-palmitoyl cysteine; by host" evidence="1">
    <location>
        <position position="564"/>
    </location>
</feature>
<feature type="glycosylation site" description="N-linked (GlcNAc...) asparagine; by host" evidence="1">
    <location>
        <position position="27"/>
    </location>
</feature>
<feature type="glycosylation site" description="N-linked (GlcNAc...) asparagine; by host" evidence="1">
    <location>
        <position position="28"/>
    </location>
</feature>
<feature type="glycosylation site" description="N-linked (GlcNAc...) asparagine; by host" evidence="1">
    <location>
        <position position="40"/>
    </location>
</feature>
<feature type="glycosylation site" description="N-linked (GlcNAc...) asparagine; by host" evidence="1">
    <location>
        <position position="285"/>
    </location>
</feature>
<feature type="glycosylation site" description="N-linked (GlcNAc...) asparagine; by host" evidence="1">
    <location>
        <position position="303"/>
    </location>
</feature>
<feature type="glycosylation site" description="N-linked (GlcNAc...) asparagine; by host" evidence="1">
    <location>
        <position position="497"/>
    </location>
</feature>
<feature type="disulfide bond" description="Interchain (between HA1 and HA2 chains)" evidence="1">
    <location>
        <begin position="21"/>
        <end position="480"/>
    </location>
</feature>
<feature type="disulfide bond" evidence="1">
    <location>
        <begin position="59"/>
        <end position="291"/>
    </location>
</feature>
<feature type="disulfide bond" evidence="1">
    <location>
        <begin position="72"/>
        <end position="84"/>
    </location>
</feature>
<feature type="disulfide bond" evidence="1">
    <location>
        <begin position="107"/>
        <end position="152"/>
    </location>
</feature>
<feature type="disulfide bond" evidence="1">
    <location>
        <begin position="295"/>
        <end position="319"/>
    </location>
</feature>
<feature type="disulfide bond" evidence="1">
    <location>
        <begin position="487"/>
        <end position="491"/>
    </location>
</feature>
<feature type="sequence conflict" description="In Ref. 2; AAM75158." evidence="3" ref="2">
    <original>C</original>
    <variation>S</variation>
    <location>
        <position position="10"/>
    </location>
</feature>
<feature type="sequence conflict" description="In Ref. 1; CAA24272." evidence="3" ref="1">
    <original>N</original>
    <variation>TK</variation>
    <location>
        <position position="146"/>
    </location>
</feature>
<feature type="sequence conflict" description="In Ref. 1; CAA24272." evidence="3" ref="1">
    <original>E</original>
    <variation>A</variation>
    <location>
        <position position="155"/>
    </location>
</feature>
<feature type="sequence conflict" description="In Ref. 1; CAA24272." evidence="3" ref="1">
    <original>P</original>
    <variation>S</variation>
    <location>
        <position position="199"/>
    </location>
</feature>
<feature type="sequence conflict" description="In Ref. 1; CAA24272." evidence="3" ref="1">
    <original>E</original>
    <variation>D</variation>
    <location>
        <position position="203"/>
    </location>
</feature>
<feature type="sequence conflict" description="In Ref. 1; CAA24272 and 2; AAM75158." evidence="3" ref="1 2">
    <original>L</original>
    <variation>I</variation>
    <location>
        <position position="207"/>
    </location>
</feature>
<feature type="sequence conflict" description="In Ref. 1; CAA24272." evidence="3" ref="1">
    <original>M</original>
    <variation>R</variation>
    <location>
        <position position="268"/>
    </location>
</feature>
<feature type="sequence conflict" description="In Ref. 1; CAA24272." evidence="3" ref="1">
    <original>Y</original>
    <variation>F</variation>
    <location>
        <position position="308"/>
    </location>
</feature>
<feature type="sequence conflict" description="In Ref. 3; ABO21709." evidence="3" ref="3">
    <original>I</original>
    <variation>N</variation>
    <location>
        <position position="337"/>
    </location>
</feature>
<feature type="sequence conflict" description="In Ref. 1; CAA24272." evidence="3" ref="1">
    <original>T</original>
    <variation>S</variation>
    <location>
        <position position="397"/>
    </location>
</feature>
<feature type="strand" evidence="4">
    <location>
        <begin position="19"/>
        <end position="25"/>
    </location>
</feature>
<feature type="strand" evidence="4">
    <location>
        <begin position="39"/>
        <end position="44"/>
    </location>
</feature>
<feature type="strand" evidence="4">
    <location>
        <begin position="46"/>
        <end position="48"/>
    </location>
</feature>
<feature type="strand" evidence="4">
    <location>
        <begin position="56"/>
        <end position="61"/>
    </location>
</feature>
<feature type="strand" evidence="4">
    <location>
        <begin position="67"/>
        <end position="70"/>
    </location>
</feature>
<feature type="helix" evidence="4">
    <location>
        <begin position="74"/>
        <end position="79"/>
    </location>
</feature>
<feature type="helix" evidence="4">
    <location>
        <begin position="82"/>
        <end position="87"/>
    </location>
</feature>
<feature type="strand" evidence="4">
    <location>
        <begin position="94"/>
        <end position="98"/>
    </location>
</feature>
<feature type="strand" evidence="4">
    <location>
        <begin position="107"/>
        <end position="110"/>
    </location>
</feature>
<feature type="helix" evidence="4">
    <location>
        <begin position="115"/>
        <end position="122"/>
    </location>
</feature>
<feature type="strand" evidence="4">
    <location>
        <begin position="125"/>
        <end position="134"/>
    </location>
</feature>
<feature type="turn" evidence="4">
    <location>
        <begin position="136"/>
        <end position="138"/>
    </location>
</feature>
<feature type="strand" evidence="4">
    <location>
        <begin position="149"/>
        <end position="154"/>
    </location>
</feature>
<feature type="strand" evidence="4">
    <location>
        <begin position="157"/>
        <end position="159"/>
    </location>
</feature>
<feature type="strand" evidence="4">
    <location>
        <begin position="162"/>
        <end position="166"/>
    </location>
</feature>
<feature type="strand" evidence="4">
    <location>
        <begin position="170"/>
        <end position="172"/>
    </location>
</feature>
<feature type="strand" evidence="4">
    <location>
        <begin position="177"/>
        <end position="182"/>
    </location>
</feature>
<feature type="strand" evidence="4">
    <location>
        <begin position="185"/>
        <end position="197"/>
    </location>
</feature>
<feature type="helix" evidence="4">
    <location>
        <begin position="201"/>
        <end position="208"/>
    </location>
</feature>
<feature type="strand" evidence="4">
    <location>
        <begin position="215"/>
        <end position="218"/>
    </location>
</feature>
<feature type="strand" evidence="4">
    <location>
        <begin position="223"/>
        <end position="226"/>
    </location>
</feature>
<feature type="strand" evidence="4">
    <location>
        <begin position="242"/>
        <end position="250"/>
    </location>
</feature>
<feature type="strand" evidence="4">
    <location>
        <begin position="255"/>
        <end position="262"/>
    </location>
</feature>
<feature type="strand" evidence="4">
    <location>
        <begin position="264"/>
        <end position="275"/>
    </location>
</feature>
<feature type="strand" evidence="4">
    <location>
        <begin position="281"/>
        <end position="283"/>
    </location>
</feature>
<feature type="strand" evidence="4">
    <location>
        <begin position="288"/>
        <end position="297"/>
    </location>
</feature>
<feature type="strand" evidence="4">
    <location>
        <begin position="300"/>
        <end position="302"/>
    </location>
</feature>
<feature type="strand" evidence="4">
    <location>
        <begin position="307"/>
        <end position="309"/>
    </location>
</feature>
<feature type="strand" evidence="4">
    <location>
        <begin position="315"/>
        <end position="319"/>
    </location>
</feature>
<feature type="strand" evidence="4">
    <location>
        <begin position="329"/>
        <end position="331"/>
    </location>
</feature>
<feature type="turn" evidence="4">
    <location>
        <begin position="350"/>
        <end position="352"/>
    </location>
</feature>
<feature type="strand" evidence="4">
    <location>
        <begin position="364"/>
        <end position="367"/>
    </location>
</feature>
<feature type="strand" evidence="5">
    <location>
        <begin position="376"/>
        <end position="379"/>
    </location>
</feature>
<feature type="helix" evidence="4">
    <location>
        <begin position="381"/>
        <end position="401"/>
    </location>
</feature>
<feature type="strand" evidence="5">
    <location>
        <begin position="405"/>
        <end position="408"/>
    </location>
</feature>
<feature type="helix" evidence="4">
    <location>
        <begin position="418"/>
        <end position="469"/>
    </location>
</feature>
<feature type="strand" evidence="4">
    <location>
        <begin position="472"/>
        <end position="475"/>
    </location>
</feature>
<feature type="strand" evidence="4">
    <location>
        <begin position="477"/>
        <end position="485"/>
    </location>
</feature>
<feature type="helix" evidence="4">
    <location>
        <begin position="491"/>
        <end position="496"/>
    </location>
</feature>
<dbReference type="EMBL" id="V01088">
    <property type="protein sequence ID" value="CAA24272.1"/>
    <property type="molecule type" value="Genomic_RNA"/>
</dbReference>
<dbReference type="EMBL" id="AF389118">
    <property type="protein sequence ID" value="AAM75158.1"/>
    <property type="molecule type" value="Genomic_RNA"/>
</dbReference>
<dbReference type="EMBL" id="EF467821">
    <property type="protein sequence ID" value="ABO21709.1"/>
    <property type="molecule type" value="Genomic_RNA"/>
</dbReference>
<dbReference type="EMBL" id="CY009444">
    <property type="protein sequence ID" value="ABD77675.1"/>
    <property type="molecule type" value="Genomic_RNA"/>
</dbReference>
<dbReference type="EMBL" id="J02144">
    <property type="protein sequence ID" value="AAA43194.1"/>
    <property type="molecule type" value="Genomic_RNA"/>
</dbReference>
<dbReference type="RefSeq" id="NP_040980.1">
    <property type="nucleotide sequence ID" value="NC_002017.1"/>
</dbReference>
<dbReference type="PDB" id="1RU7">
    <property type="method" value="X-ray"/>
    <property type="resolution" value="2.30 A"/>
    <property type="chains" value="A/C/E/G/I/K=18-338, B/D/F/H/J/L=344-503"/>
</dbReference>
<dbReference type="PDB" id="1RVX">
    <property type="method" value="X-ray"/>
    <property type="resolution" value="2.20 A"/>
    <property type="chains" value="A/C/E/G/I/K=14-338, B/D/F/H/J/L=344-503"/>
</dbReference>
<dbReference type="PDB" id="1RVZ">
    <property type="method" value="X-ray"/>
    <property type="resolution" value="2.25 A"/>
    <property type="chains" value="A/C/E/G/I/K=14-338, B/D/F/H/J/L=344-503"/>
</dbReference>
<dbReference type="PDBsum" id="1RU7"/>
<dbReference type="PDBsum" id="1RVX"/>
<dbReference type="PDBsum" id="1RVZ"/>
<dbReference type="SMR" id="P03452"/>
<dbReference type="IntAct" id="P03452">
    <property type="interactions" value="38"/>
</dbReference>
<dbReference type="MINT" id="P03452"/>
<dbReference type="BindingDB" id="P03452"/>
<dbReference type="ChEMBL" id="CHEMBL1075313"/>
<dbReference type="DrugCentral" id="P03452"/>
<dbReference type="UniLectin" id="P03452"/>
<dbReference type="GlyCosmos" id="P03452">
    <property type="glycosylation" value="6 sites, No reported glycans"/>
</dbReference>
<dbReference type="ABCD" id="P03452">
    <property type="antibodies" value="63 sequenced antibodies"/>
</dbReference>
<dbReference type="GeneID" id="956529"/>
<dbReference type="KEGG" id="vg:956529"/>
<dbReference type="OrthoDB" id="2813at10239"/>
<dbReference type="Reactome" id="R-HSA-168255">
    <property type="pathway name" value="Influenza Infection"/>
</dbReference>
<dbReference type="Reactome" id="R-HSA-168275">
    <property type="pathway name" value="Entry of Influenza Virion into Host Cell via Endocytosis"/>
</dbReference>
<dbReference type="Reactome" id="R-HSA-168288">
    <property type="pathway name" value="Fusion of the Influenza Virion to the Host Cell Endosome"/>
</dbReference>
<dbReference type="Reactome" id="R-HSA-168298">
    <property type="pathway name" value="Release"/>
</dbReference>
<dbReference type="Reactome" id="R-HSA-168302">
    <property type="pathway name" value="Budding"/>
</dbReference>
<dbReference type="Reactome" id="R-HSA-168303">
    <property type="pathway name" value="Packaging of Eight RNA Segments"/>
</dbReference>
<dbReference type="Reactome" id="R-HSA-168316">
    <property type="pathway name" value="Assembly of Viral Components at the Budding Site"/>
</dbReference>
<dbReference type="Reactome" id="R-HSA-168336">
    <property type="pathway name" value="Uncoating of the Influenza Virion"/>
</dbReference>
<dbReference type="Reactome" id="R-HSA-168874">
    <property type="pathway name" value="Transport of HA trimer, NA tetramer and M2 tetramer from the endoplasmic reticulum to the Golgi Apparatus"/>
</dbReference>
<dbReference type="Reactome" id="R-HSA-192823">
    <property type="pathway name" value="Viral mRNA Translation"/>
</dbReference>
<dbReference type="Reactome" id="R-HSA-198933">
    <property type="pathway name" value="Immunoregulatory interactions between a Lymphoid and a non-Lymphoid cell"/>
</dbReference>
<dbReference type="EvolutionaryTrace" id="P03452"/>
<dbReference type="PRO" id="PR:P03452"/>
<dbReference type="Proteomes" id="UP000009255">
    <property type="component" value="Genome"/>
</dbReference>
<dbReference type="Proteomes" id="UP000116373">
    <property type="component" value="Genome"/>
</dbReference>
<dbReference type="Proteomes" id="UP000170967">
    <property type="component" value="Genome"/>
</dbReference>
<dbReference type="GO" id="GO:0005576">
    <property type="term" value="C:extracellular region"/>
    <property type="evidence" value="ECO:0000304"/>
    <property type="project" value="Reactome"/>
</dbReference>
<dbReference type="GO" id="GO:0020002">
    <property type="term" value="C:host cell plasma membrane"/>
    <property type="evidence" value="ECO:0007669"/>
    <property type="project" value="UniProtKB-SubCell"/>
</dbReference>
<dbReference type="GO" id="GO:0005886">
    <property type="term" value="C:plasma membrane"/>
    <property type="evidence" value="ECO:0000304"/>
    <property type="project" value="Reactome"/>
</dbReference>
<dbReference type="GO" id="GO:0019031">
    <property type="term" value="C:viral envelope"/>
    <property type="evidence" value="ECO:0007669"/>
    <property type="project" value="UniProtKB-UniRule"/>
</dbReference>
<dbReference type="GO" id="GO:0055036">
    <property type="term" value="C:virion membrane"/>
    <property type="evidence" value="ECO:0000304"/>
    <property type="project" value="Reactome"/>
</dbReference>
<dbReference type="GO" id="GO:0046789">
    <property type="term" value="F:host cell surface receptor binding"/>
    <property type="evidence" value="ECO:0007669"/>
    <property type="project" value="UniProtKB-UniRule"/>
</dbReference>
<dbReference type="GO" id="GO:0075512">
    <property type="term" value="P:clathrin-dependent endocytosis of virus by host cell"/>
    <property type="evidence" value="ECO:0007669"/>
    <property type="project" value="UniProtKB-UniRule"/>
</dbReference>
<dbReference type="GO" id="GO:0039654">
    <property type="term" value="P:fusion of virus membrane with host endosome membrane"/>
    <property type="evidence" value="ECO:0007669"/>
    <property type="project" value="UniProtKB-UniRule"/>
</dbReference>
<dbReference type="GO" id="GO:0019064">
    <property type="term" value="P:fusion of virus membrane with host plasma membrane"/>
    <property type="evidence" value="ECO:0007669"/>
    <property type="project" value="InterPro"/>
</dbReference>
<dbReference type="GO" id="GO:0046761">
    <property type="term" value="P:viral budding from plasma membrane"/>
    <property type="evidence" value="ECO:0000314"/>
    <property type="project" value="UniProtKB"/>
</dbReference>
<dbReference type="GO" id="GO:0019062">
    <property type="term" value="P:virion attachment to host cell"/>
    <property type="evidence" value="ECO:0007669"/>
    <property type="project" value="UniProtKB-KW"/>
</dbReference>
<dbReference type="FunFam" id="3.90.20.10:FF:000002">
    <property type="entry name" value="Hemagglutinin"/>
    <property type="match status" value="1"/>
</dbReference>
<dbReference type="Gene3D" id="3.90.20.10">
    <property type="match status" value="1"/>
</dbReference>
<dbReference type="Gene3D" id="3.90.209.20">
    <property type="match status" value="1"/>
</dbReference>
<dbReference type="Gene3D" id="2.10.77.10">
    <property type="entry name" value="Hemagglutinin Chain A, Domain 2"/>
    <property type="match status" value="1"/>
</dbReference>
<dbReference type="HAMAP" id="MF_04072">
    <property type="entry name" value="INFV_HEMA"/>
    <property type="match status" value="1"/>
</dbReference>
<dbReference type="InterPro" id="IPR008980">
    <property type="entry name" value="Capsid_hemagglutn"/>
</dbReference>
<dbReference type="InterPro" id="IPR013828">
    <property type="entry name" value="Hemagglutn_HA1_a/b_dom_sf"/>
</dbReference>
<dbReference type="InterPro" id="IPR000149">
    <property type="entry name" value="Hemagglutn_influenz_A"/>
</dbReference>
<dbReference type="InterPro" id="IPR001364">
    <property type="entry name" value="Hemagglutn_influenz_A/B"/>
</dbReference>
<dbReference type="Pfam" id="PF00509">
    <property type="entry name" value="Hemagglutinin"/>
    <property type="match status" value="1"/>
</dbReference>
<dbReference type="PRINTS" id="PR00330">
    <property type="entry name" value="HEMAGGLUTN1"/>
</dbReference>
<dbReference type="PRINTS" id="PR00329">
    <property type="entry name" value="HEMAGGLUTN12"/>
</dbReference>
<dbReference type="SUPFAM" id="SSF58064">
    <property type="entry name" value="Influenza hemagglutinin (stalk)"/>
    <property type="match status" value="1"/>
</dbReference>
<dbReference type="SUPFAM" id="SSF49818">
    <property type="entry name" value="Viral protein domain"/>
    <property type="match status" value="1"/>
</dbReference>
<evidence type="ECO:0000255" key="1">
    <source>
        <dbReference type="HAMAP-Rule" id="MF_04072"/>
    </source>
</evidence>
<evidence type="ECO:0000269" key="2">
    <source>
    </source>
</evidence>
<evidence type="ECO:0000305" key="3"/>
<evidence type="ECO:0007829" key="4">
    <source>
        <dbReference type="PDB" id="1RVX"/>
    </source>
</evidence>
<evidence type="ECO:0007829" key="5">
    <source>
        <dbReference type="PDB" id="1RVZ"/>
    </source>
</evidence>
<comment type="function">
    <text evidence="1">Binds to sialic acid-containing receptors on the cell surface, bringing about the attachment of the virus particle to the cell. This attachment induces virion internalization either through clathrin-dependent endocytosis or through clathrin- and caveolin-independent pathway. Plays a major role in the determination of host range restriction and virulence. Class I viral fusion protein. Responsible for penetration of the virus into the cell cytoplasm by mediating the fusion of the membrane of the endocytosed virus particle with the endosomal membrane. Low pH in endosomes induces an irreversible conformational change in HA2, releasing the fusion hydrophobic peptide. Several trimers are required to form a competent fusion pore.</text>
</comment>
<comment type="subunit">
    <text evidence="1 2">Homotrimer of disulfide-linked HA1-HA2. Interacts with human CACNA1C (PubMed:29779930).</text>
</comment>
<comment type="interaction">
    <interactant intactId="EBI-2548105">
        <id>P03452</id>
    </interactant>
    <interactant intactId="EBI-821758">
        <id>PRO_0000000092</id>
        <label>APP</label>
        <dbReference type="UniProtKB" id="P05067"/>
    </interactant>
    <organismsDiffer>true</organismsDiffer>
    <experiments>2</experiments>
</comment>
<comment type="subcellular location">
    <subcellularLocation>
        <location evidence="1 3">Virion membrane</location>
        <topology evidence="1 3">Single-pass type I membrane protein</topology>
    </subcellularLocation>
    <subcellularLocation>
        <location evidence="1">Host apical cell membrane</location>
        <topology evidence="1 3">Single-pass type I membrane protein</topology>
    </subcellularLocation>
    <text evidence="1">Targeted to the apical plasma membrane in epithelial polarized cells through a signal present in the transmembrane domain. Associated with glycosphingolipid- and cholesterol-enriched detergent-resistant lipid rafts.</text>
</comment>
<comment type="PTM">
    <text evidence="1">Palmitoylated.</text>
</comment>
<comment type="PTM">
    <text evidence="1">In natural infection, inactive HA is matured into HA1 and HA2 outside the cell by one or more trypsin-like, arginine-specific endoprotease secreted by the bronchial epithelial cells. One identified protease that may be involved in this process is secreted in lungs by club cells.</text>
</comment>
<comment type="miscellaneous">
    <text>Major glycoprotein, comprises over 80% of the envelope proteins present in virus particle.</text>
</comment>
<comment type="miscellaneous">
    <text>The extent of infection into host organism is determined by HA. Influenza viruses bud from the apical surface of polarized epithelial cells (e.g. bronchial epithelial cells) into lumen of lungs and are therefore usually pneumotropic. The reason is that HA is cleaved by tryptase clara which is restricted to lungs. However, HAs of H5 and H7 pantropic avian viruses subtypes can be cleaved by furin and subtilisin-type enzymes, allowing the virus to grow in other organs than lungs.</text>
</comment>
<comment type="miscellaneous">
    <text evidence="3">The influenza A genome consist of 8 RNA segments. Genetic variation of hemagglutinin and/or neuraminidase genes results in the emergence of new influenza strains. The mechanism of variation can be the result of point mutations or the result of genetic reassortment between segments of two different strains.</text>
</comment>
<comment type="similarity">
    <text evidence="1">Belongs to the influenza viruses hemagglutinin family.</text>
</comment>
<reference key="1">
    <citation type="journal article" date="1981" name="Nature">
        <title>Nucleotide sequence of the haemagglutinin gene of a human influenza virus H1 subtype.</title>
        <authorList>
            <person name="Winter G."/>
            <person name="Fields S."/>
            <person name="Brownlee G.G."/>
        </authorList>
    </citation>
    <scope>NUCLEOTIDE SEQUENCE [GENOMIC RNA]</scope>
</reference>
<reference key="2">
    <citation type="journal article" date="2001" name="Philos. Trans. R. Soc. Lond., B, Biol. Sci.">
        <title>Plasmid-only rescue of influenza A virus vaccine candidates.</title>
        <authorList>
            <person name="Schickli J.H."/>
            <person name="Flandorfer A."/>
            <person name="Nakaya T."/>
            <person name="Martinez-Sobrido L."/>
            <person name="Garcia-Sastre A."/>
            <person name="Palese P."/>
        </authorList>
    </citation>
    <scope>NUCLEOTIDE SEQUENCE [GENOMIC RNA]</scope>
</reference>
<reference key="3">
    <citation type="journal article" date="2004" name="Virus Res.">
        <title>Efficient generation and growth of influenza virus A/PR/8/34 from eight cDNA fragments.</title>
        <authorList>
            <person name="de Wit E."/>
            <person name="Spronken M.I.J."/>
            <person name="Bestebroer T.M."/>
            <person name="Rimmelzwaan G.F."/>
            <person name="Osterhaus A.D.M.E."/>
            <person name="Fouchier R.A.M."/>
        </authorList>
    </citation>
    <scope>NUCLEOTIDE SEQUENCE [GENOMIC RNA]</scope>
    <scope>REVERSE GENETICS</scope>
</reference>
<reference key="4">
    <citation type="submission" date="2006-03" db="EMBL/GenBank/DDBJ databases">
        <title>The NIAID influenza genome sequencing project.</title>
        <authorList>
            <person name="Ghedin E."/>
            <person name="Spiro D."/>
            <person name="Miller N."/>
            <person name="Zaborsky J."/>
            <person name="Feldblyum T."/>
            <person name="Subbu V."/>
            <person name="Shumway M."/>
            <person name="Sparenborg J."/>
            <person name="Groveman L."/>
            <person name="Halpin R."/>
            <person name="Sitz J."/>
            <person name="Koo H."/>
            <person name="Salzberg S.L."/>
            <person name="Webster R.G."/>
            <person name="Hoffmann E."/>
            <person name="Krauss S."/>
            <person name="Naeve C."/>
            <person name="Bao Y."/>
            <person name="Bolotov P."/>
            <person name="Dernovoy D."/>
            <person name="Kiryutin B."/>
            <person name="Lipman D.J."/>
            <person name="Tatusova T."/>
        </authorList>
    </citation>
    <scope>NUCLEOTIDE SEQUENCE [GENOMIC RNA]</scope>
    <source>
        <strain>Isolate EE12/E1</strain>
    </source>
</reference>
<reference key="5">
    <citation type="journal article" date="1982" name="Cell">
        <title>The antigenic structure of the influenza virus A/PR/8/34 hemagglutinin (H1 subtype).</title>
        <authorList>
            <person name="Caton A.J."/>
            <person name="Brownlee G.G."/>
            <person name="Yewdell J.W."/>
            <person name="Gerhard W."/>
        </authorList>
    </citation>
    <scope>NUCLEOTIDE SEQUENCE [GENOMIC RNA] OF 18-343</scope>
</reference>
<reference key="6">
    <citation type="journal article" date="2018" name="Cell Host Microbe">
        <title>Channel Binds Hemagglutinin and Mediates Influenza A Virus Entry into Mammalian Cells.</title>
        <authorList>
            <person name="Fujioka Y."/>
            <person name="Nishide S."/>
            <person name="Ose T."/>
            <person name="Suzuki T."/>
            <person name="Kato I."/>
            <person name="Fukuhara H."/>
            <person name="Fujioka M."/>
            <person name="Horiuchi K."/>
            <person name="Satoh A.O."/>
            <person name="Nepal P."/>
            <person name="Kashiwagi S."/>
            <person name="Wang J."/>
            <person name="Horiguchi M."/>
            <person name="Sato Y."/>
            <person name="Paudel S."/>
            <person name="Nanbo A."/>
            <person name="Miyazaki T."/>
            <person name="Hasegawa H."/>
            <person name="Maenaka K."/>
            <person name="Ohba Y."/>
        </authorList>
    </citation>
    <scope>INTERACTION WITH HUMAN CACNA1C</scope>
</reference>
<protein>
    <recommendedName>
        <fullName evidence="1">Hemagglutinin</fullName>
    </recommendedName>
    <component>
        <recommendedName>
            <fullName evidence="1">Hemagglutinin HA1 chain</fullName>
        </recommendedName>
    </component>
    <component>
        <recommendedName>
            <fullName evidence="1">Hemagglutinin HA2 chain</fullName>
        </recommendedName>
    </component>
</protein>
<gene>
    <name evidence="1" type="primary">HA</name>
</gene>
<sequence>MKANLLVLLCALAAADADTICIGYHANNSTDTVDTVLEKNVTVTHSVNLLEDSHNGKLCRLKGIAPLQLGKCNIAGWLLGNPECDPLLPVRSWSYIVETPNSENGICYPGDFIDYEELREQLSSVSSFERFEIFPKESSWPNHNTNGVTAACSHEGKSSFYRNLLWLTEKEGSYPKLKNSYVNKKGKEVLVLWGIHHPPNSKEQQNLYQNENAYVSVVTSNYNRRFTPEIAERPKVRDQAGRMNYYWTLLKPGDTIIFEANGNLIAPMYAFALSRGFGSGIITSNASMHECNTKCQTPLGAINSSLPYQNIHPVTIGECPKYVRSAKLRMVTGLRNIPSIQSRGLFGAIAGFIEGGWTGMIDGWYGYHHQNEQGSGYAADQKSTQNAINGITNKVNTVIEKMNIQFTAVGKEFNKLEKRMENLNKKVDDGFLDIWTYNAELLVLLENERTLDFHDSNVKNLYEKVKSQLKNNAKEIGNGCFEFYHKCDNECMESVRNGTYDYPKYSEESKLNREKVDGVKLESMGIYQILAIYSTVASSLVLLVSLGAISFWMCSNGSLQCRICI</sequence>
<proteinExistence type="evidence at protein level"/>
<accession>P03452</accession>
<accession>A4GXH4</accession>
<accession>Q20N38</accession>
<accession>Q83964</accession>
<accession>Q8JUU5</accession>
<organismHost>
    <name type="scientific">Aves</name>
    <dbReference type="NCBI Taxonomy" id="8782"/>
</organismHost>
<organismHost>
    <name type="scientific">Homo sapiens</name>
    <name type="common">Human</name>
    <dbReference type="NCBI Taxonomy" id="9606"/>
</organismHost>
<organismHost>
    <name type="scientific">Sus scrofa</name>
    <name type="common">Pig</name>
    <dbReference type="NCBI Taxonomy" id="9823"/>
</organismHost>
<organism>
    <name type="scientific">Influenza A virus (strain A/Puerto Rico/8/1934 H1N1)</name>
    <dbReference type="NCBI Taxonomy" id="211044"/>
    <lineage>
        <taxon>Viruses</taxon>
        <taxon>Riboviria</taxon>
        <taxon>Orthornavirae</taxon>
        <taxon>Negarnaviricota</taxon>
        <taxon>Polyploviricotina</taxon>
        <taxon>Insthoviricetes</taxon>
        <taxon>Articulavirales</taxon>
        <taxon>Orthomyxoviridae</taxon>
        <taxon>Alphainfluenzavirus</taxon>
        <taxon>Alphainfluenzavirus influenzae</taxon>
        <taxon>Influenza A virus</taxon>
    </lineage>
</organism>
<name>HEMA_I34A1</name>
<keyword id="KW-0002">3D-structure</keyword>
<keyword id="KW-1167">Clathrin- and caveolin-independent endocytosis of virus by host</keyword>
<keyword id="KW-1165">Clathrin-mediated endocytosis of virus by host</keyword>
<keyword id="KW-1015">Disulfide bond</keyword>
<keyword id="KW-1170">Fusion of virus membrane with host endosomal membrane</keyword>
<keyword id="KW-1168">Fusion of virus membrane with host membrane</keyword>
<keyword id="KW-0325">Glycoprotein</keyword>
<keyword id="KW-0348">Hemagglutinin</keyword>
<keyword id="KW-1032">Host cell membrane</keyword>
<keyword id="KW-1043">Host membrane</keyword>
<keyword id="KW-0945">Host-virus interaction</keyword>
<keyword id="KW-0449">Lipoprotein</keyword>
<keyword id="KW-0472">Membrane</keyword>
<keyword id="KW-0564">Palmitate</keyword>
<keyword id="KW-1185">Reference proteome</keyword>
<keyword id="KW-0732">Signal</keyword>
<keyword id="KW-0812">Transmembrane</keyword>
<keyword id="KW-1133">Transmembrane helix</keyword>
<keyword id="KW-1161">Viral attachment to host cell</keyword>
<keyword id="KW-0261">Viral envelope protein</keyword>
<keyword id="KW-1162">Viral penetration into host cytoplasm</keyword>
<keyword id="KW-0946">Virion</keyword>
<keyword id="KW-1164">Virus endocytosis by host</keyword>
<keyword id="KW-1160">Virus entry into host cell</keyword>